<comment type="function">
    <text evidence="1">Catalyzes the NAD(+)-dependent oxidation of L-threonine to 2-amino-3-ketobutyrate.</text>
</comment>
<comment type="catalytic activity">
    <reaction evidence="1">
        <text>L-threonine + NAD(+) = (2S)-2-amino-3-oxobutanoate + NADH + H(+)</text>
        <dbReference type="Rhea" id="RHEA:13161"/>
        <dbReference type="ChEBI" id="CHEBI:15378"/>
        <dbReference type="ChEBI" id="CHEBI:57540"/>
        <dbReference type="ChEBI" id="CHEBI:57926"/>
        <dbReference type="ChEBI" id="CHEBI:57945"/>
        <dbReference type="ChEBI" id="CHEBI:78948"/>
        <dbReference type="EC" id="1.1.1.103"/>
    </reaction>
</comment>
<comment type="cofactor">
    <cofactor evidence="1">
        <name>Zn(2+)</name>
        <dbReference type="ChEBI" id="CHEBI:29105"/>
    </cofactor>
    <text evidence="1">Binds 2 Zn(2+) ions per subunit.</text>
</comment>
<comment type="pathway">
    <text evidence="1">Amino-acid degradation; L-threonine degradation via oxydo-reductase pathway; glycine from L-threonine: step 1/2.</text>
</comment>
<comment type="subunit">
    <text evidence="1">Homotetramer.</text>
</comment>
<comment type="subcellular location">
    <subcellularLocation>
        <location evidence="1">Cytoplasm</location>
    </subcellularLocation>
</comment>
<comment type="similarity">
    <text evidence="1">Belongs to the zinc-containing alcohol dehydrogenase family.</text>
</comment>
<gene>
    <name evidence="1" type="primary">tdh</name>
    <name type="ordered locus">YPN_3790</name>
    <name type="ORF">YP516_4310</name>
</gene>
<keyword id="KW-0963">Cytoplasm</keyword>
<keyword id="KW-0479">Metal-binding</keyword>
<keyword id="KW-0520">NAD</keyword>
<keyword id="KW-0560">Oxidoreductase</keyword>
<keyword id="KW-0862">Zinc</keyword>
<reference key="1">
    <citation type="journal article" date="2006" name="J. Bacteriol.">
        <title>Complete genome sequence of Yersinia pestis strains Antiqua and Nepal516: evidence of gene reduction in an emerging pathogen.</title>
        <authorList>
            <person name="Chain P.S.G."/>
            <person name="Hu P."/>
            <person name="Malfatti S.A."/>
            <person name="Radnedge L."/>
            <person name="Larimer F."/>
            <person name="Vergez L.M."/>
            <person name="Worsham P."/>
            <person name="Chu M.C."/>
            <person name="Andersen G.L."/>
        </authorList>
    </citation>
    <scope>NUCLEOTIDE SEQUENCE [LARGE SCALE GENOMIC DNA]</scope>
    <source>
        <strain>Nepal516</strain>
    </source>
</reference>
<reference key="2">
    <citation type="submission" date="2009-04" db="EMBL/GenBank/DDBJ databases">
        <title>Yersinia pestis Nepal516A whole genome shotgun sequencing project.</title>
        <authorList>
            <person name="Plunkett G. III"/>
            <person name="Anderson B.D."/>
            <person name="Baumler D.J."/>
            <person name="Burland V."/>
            <person name="Cabot E.L."/>
            <person name="Glasner J.D."/>
            <person name="Mau B."/>
            <person name="Neeno-Eckwall E."/>
            <person name="Perna N.T."/>
            <person name="Munk A.C."/>
            <person name="Tapia R."/>
            <person name="Green L.D."/>
            <person name="Rogers Y.C."/>
            <person name="Detter J.C."/>
            <person name="Bruce D.C."/>
            <person name="Brettin T.S."/>
        </authorList>
    </citation>
    <scope>NUCLEOTIDE SEQUENCE [LARGE SCALE GENOMIC DNA]</scope>
    <source>
        <strain>Nepal516</strain>
    </source>
</reference>
<sequence>MKALSKLKAEEGIWMTDVPQPELGHNDIMIKIRKTAICGTDVHIYNWDEWSQKTIPVPMVVGHEYVGEVVAIGQEVKGFNIGDRVSGEGHITCGHCRNCRGGRTHLCRNTVGVGVNRPGSFAEYLVIPAFNAFKIPDNISDELAAIFDPFGNAVHTALSFDLVGEDVLVSGAGPIGIMAAAVCKHVGARHVVIADVNEYRLDLARKMGVTRAVNVSKENLNDVMTELGMTEGFDVGLEMSGAPPAFRSLLNSMNHGGRIAMLGIPPSDMSIDWNQVIFKGLFIKGIYGREMFETWYKMAALIQSGLDLTPIITHRFPIDEFQQGFDAMRSGKSGKVVLSWD</sequence>
<name>TDH_YERPN</name>
<organism>
    <name type="scientific">Yersinia pestis bv. Antiqua (strain Nepal516)</name>
    <dbReference type="NCBI Taxonomy" id="377628"/>
    <lineage>
        <taxon>Bacteria</taxon>
        <taxon>Pseudomonadati</taxon>
        <taxon>Pseudomonadota</taxon>
        <taxon>Gammaproteobacteria</taxon>
        <taxon>Enterobacterales</taxon>
        <taxon>Yersiniaceae</taxon>
        <taxon>Yersinia</taxon>
    </lineage>
</organism>
<feature type="chain" id="PRO_1000051672" description="L-threonine 3-dehydrogenase">
    <location>
        <begin position="1"/>
        <end position="341"/>
    </location>
</feature>
<feature type="active site" description="Charge relay system" evidence="1">
    <location>
        <position position="40"/>
    </location>
</feature>
<feature type="active site" description="Charge relay system" evidence="1">
    <location>
        <position position="43"/>
    </location>
</feature>
<feature type="binding site" evidence="1">
    <location>
        <position position="38"/>
    </location>
    <ligand>
        <name>Zn(2+)</name>
        <dbReference type="ChEBI" id="CHEBI:29105"/>
        <label>1</label>
        <note>catalytic</note>
    </ligand>
</feature>
<feature type="binding site" evidence="1">
    <location>
        <position position="63"/>
    </location>
    <ligand>
        <name>Zn(2+)</name>
        <dbReference type="ChEBI" id="CHEBI:29105"/>
        <label>1</label>
        <note>catalytic</note>
    </ligand>
</feature>
<feature type="binding site" evidence="1">
    <location>
        <position position="64"/>
    </location>
    <ligand>
        <name>Zn(2+)</name>
        <dbReference type="ChEBI" id="CHEBI:29105"/>
        <label>1</label>
        <note>catalytic</note>
    </ligand>
</feature>
<feature type="binding site" evidence="1">
    <location>
        <position position="93"/>
    </location>
    <ligand>
        <name>Zn(2+)</name>
        <dbReference type="ChEBI" id="CHEBI:29105"/>
        <label>2</label>
    </ligand>
</feature>
<feature type="binding site" evidence="1">
    <location>
        <position position="96"/>
    </location>
    <ligand>
        <name>Zn(2+)</name>
        <dbReference type="ChEBI" id="CHEBI:29105"/>
        <label>2</label>
    </ligand>
</feature>
<feature type="binding site" evidence="1">
    <location>
        <position position="99"/>
    </location>
    <ligand>
        <name>Zn(2+)</name>
        <dbReference type="ChEBI" id="CHEBI:29105"/>
        <label>2</label>
    </ligand>
</feature>
<feature type="binding site" evidence="1">
    <location>
        <position position="107"/>
    </location>
    <ligand>
        <name>Zn(2+)</name>
        <dbReference type="ChEBI" id="CHEBI:29105"/>
        <label>2</label>
    </ligand>
</feature>
<feature type="binding site" evidence="1">
    <location>
        <position position="175"/>
    </location>
    <ligand>
        <name>NAD(+)</name>
        <dbReference type="ChEBI" id="CHEBI:57540"/>
    </ligand>
</feature>
<feature type="binding site" evidence="1">
    <location>
        <position position="195"/>
    </location>
    <ligand>
        <name>NAD(+)</name>
        <dbReference type="ChEBI" id="CHEBI:57540"/>
    </ligand>
</feature>
<feature type="binding site" evidence="1">
    <location>
        <position position="200"/>
    </location>
    <ligand>
        <name>NAD(+)</name>
        <dbReference type="ChEBI" id="CHEBI:57540"/>
    </ligand>
</feature>
<feature type="binding site" evidence="1">
    <location>
        <begin position="262"/>
        <end position="264"/>
    </location>
    <ligand>
        <name>NAD(+)</name>
        <dbReference type="ChEBI" id="CHEBI:57540"/>
    </ligand>
</feature>
<feature type="binding site" evidence="1">
    <location>
        <begin position="286"/>
        <end position="287"/>
    </location>
    <ligand>
        <name>NAD(+)</name>
        <dbReference type="ChEBI" id="CHEBI:57540"/>
    </ligand>
</feature>
<feature type="site" description="Important for catalytic activity for the proton relay mechanism but does not participate directly in the coordination of zinc atom" evidence="1">
    <location>
        <position position="148"/>
    </location>
</feature>
<accession>Q1CD13</accession>
<accession>D1Q2F0</accession>
<evidence type="ECO:0000255" key="1">
    <source>
        <dbReference type="HAMAP-Rule" id="MF_00627"/>
    </source>
</evidence>
<protein>
    <recommendedName>
        <fullName evidence="1">L-threonine 3-dehydrogenase</fullName>
        <shortName evidence="1">TDH</shortName>
        <ecNumber evidence="1">1.1.1.103</ecNumber>
    </recommendedName>
</protein>
<dbReference type="EC" id="1.1.1.103" evidence="1"/>
<dbReference type="EMBL" id="CP000305">
    <property type="protein sequence ID" value="ABG20117.1"/>
    <property type="molecule type" value="Genomic_DNA"/>
</dbReference>
<dbReference type="EMBL" id="ACNQ01000019">
    <property type="protein sequence ID" value="EEO74703.1"/>
    <property type="molecule type" value="Genomic_DNA"/>
</dbReference>
<dbReference type="RefSeq" id="WP_002208981.1">
    <property type="nucleotide sequence ID" value="NZ_ACNQ01000019.1"/>
</dbReference>
<dbReference type="SMR" id="Q1CD13"/>
<dbReference type="GeneID" id="57974530"/>
<dbReference type="KEGG" id="ypn:YPN_3790"/>
<dbReference type="HOGENOM" id="CLU_026673_11_0_6"/>
<dbReference type="UniPathway" id="UPA00046">
    <property type="reaction ID" value="UER00505"/>
</dbReference>
<dbReference type="Proteomes" id="UP000008936">
    <property type="component" value="Chromosome"/>
</dbReference>
<dbReference type="GO" id="GO:0005737">
    <property type="term" value="C:cytoplasm"/>
    <property type="evidence" value="ECO:0007669"/>
    <property type="project" value="UniProtKB-SubCell"/>
</dbReference>
<dbReference type="GO" id="GO:0008743">
    <property type="term" value="F:L-threonine 3-dehydrogenase activity"/>
    <property type="evidence" value="ECO:0007669"/>
    <property type="project" value="UniProtKB-UniRule"/>
</dbReference>
<dbReference type="GO" id="GO:0008270">
    <property type="term" value="F:zinc ion binding"/>
    <property type="evidence" value="ECO:0007669"/>
    <property type="project" value="UniProtKB-UniRule"/>
</dbReference>
<dbReference type="GO" id="GO:0019518">
    <property type="term" value="P:L-threonine catabolic process to glycine"/>
    <property type="evidence" value="ECO:0007669"/>
    <property type="project" value="UniProtKB-UniPathway"/>
</dbReference>
<dbReference type="FunFam" id="3.40.50.720:FF:000059">
    <property type="entry name" value="L-threonine 3-dehydrogenase"/>
    <property type="match status" value="1"/>
</dbReference>
<dbReference type="Gene3D" id="3.90.180.10">
    <property type="entry name" value="Medium-chain alcohol dehydrogenases, catalytic domain"/>
    <property type="match status" value="1"/>
</dbReference>
<dbReference type="Gene3D" id="3.40.50.720">
    <property type="entry name" value="NAD(P)-binding Rossmann-like Domain"/>
    <property type="match status" value="1"/>
</dbReference>
<dbReference type="HAMAP" id="MF_00627">
    <property type="entry name" value="Thr_dehydrog"/>
    <property type="match status" value="1"/>
</dbReference>
<dbReference type="InterPro" id="IPR013149">
    <property type="entry name" value="ADH-like_C"/>
</dbReference>
<dbReference type="InterPro" id="IPR013154">
    <property type="entry name" value="ADH-like_N"/>
</dbReference>
<dbReference type="InterPro" id="IPR002328">
    <property type="entry name" value="ADH_Zn_CS"/>
</dbReference>
<dbReference type="InterPro" id="IPR011032">
    <property type="entry name" value="GroES-like_sf"/>
</dbReference>
<dbReference type="InterPro" id="IPR004627">
    <property type="entry name" value="L-Threonine_3-DHase"/>
</dbReference>
<dbReference type="InterPro" id="IPR036291">
    <property type="entry name" value="NAD(P)-bd_dom_sf"/>
</dbReference>
<dbReference type="InterPro" id="IPR020843">
    <property type="entry name" value="PKS_ER"/>
</dbReference>
<dbReference type="InterPro" id="IPR050129">
    <property type="entry name" value="Zn_alcohol_dh"/>
</dbReference>
<dbReference type="NCBIfam" id="NF003808">
    <property type="entry name" value="PRK05396.1"/>
    <property type="match status" value="1"/>
</dbReference>
<dbReference type="NCBIfam" id="TIGR00692">
    <property type="entry name" value="tdh"/>
    <property type="match status" value="1"/>
</dbReference>
<dbReference type="PANTHER" id="PTHR43401">
    <property type="entry name" value="L-THREONINE 3-DEHYDROGENASE"/>
    <property type="match status" value="1"/>
</dbReference>
<dbReference type="PANTHER" id="PTHR43401:SF2">
    <property type="entry name" value="L-THREONINE 3-DEHYDROGENASE"/>
    <property type="match status" value="1"/>
</dbReference>
<dbReference type="Pfam" id="PF08240">
    <property type="entry name" value="ADH_N"/>
    <property type="match status" value="1"/>
</dbReference>
<dbReference type="Pfam" id="PF00107">
    <property type="entry name" value="ADH_zinc_N"/>
    <property type="match status" value="1"/>
</dbReference>
<dbReference type="SMART" id="SM00829">
    <property type="entry name" value="PKS_ER"/>
    <property type="match status" value="1"/>
</dbReference>
<dbReference type="SUPFAM" id="SSF50129">
    <property type="entry name" value="GroES-like"/>
    <property type="match status" value="1"/>
</dbReference>
<dbReference type="SUPFAM" id="SSF51735">
    <property type="entry name" value="NAD(P)-binding Rossmann-fold domains"/>
    <property type="match status" value="1"/>
</dbReference>
<dbReference type="PROSITE" id="PS00059">
    <property type="entry name" value="ADH_ZINC"/>
    <property type="match status" value="1"/>
</dbReference>
<proteinExistence type="inferred from homology"/>